<dbReference type="EMBL" id="AE014297">
    <property type="protein sequence ID" value="AAF56388.5"/>
    <property type="molecule type" value="Genomic_DNA"/>
</dbReference>
<dbReference type="EMBL" id="AE014297">
    <property type="protein sequence ID" value="ABW08753.2"/>
    <property type="molecule type" value="Genomic_DNA"/>
</dbReference>
<dbReference type="EMBL" id="AE014297">
    <property type="protein sequence ID" value="AGB96327.1"/>
    <property type="molecule type" value="Genomic_DNA"/>
</dbReference>
<dbReference type="EMBL" id="BT032798">
    <property type="protein sequence ID" value="ACD81812.1"/>
    <property type="molecule type" value="mRNA"/>
</dbReference>
<dbReference type="EMBL" id="BT089029">
    <property type="protein sequence ID" value="ACU00262.1"/>
    <property type="status" value="ALT_INIT"/>
    <property type="molecule type" value="mRNA"/>
</dbReference>
<dbReference type="RefSeq" id="NP_001097909.2">
    <molecule id="Q9VBY8-2"/>
    <property type="nucleotide sequence ID" value="NM_001104439.3"/>
</dbReference>
<dbReference type="RefSeq" id="NP_001262947.1">
    <molecule id="Q9VBY8-3"/>
    <property type="nucleotide sequence ID" value="NM_001276018.1"/>
</dbReference>
<dbReference type="RefSeq" id="NP_651329.4">
    <molecule id="Q9VBY8-1"/>
    <property type="nucleotide sequence ID" value="NM_143072.4"/>
</dbReference>
<dbReference type="SMR" id="Q9VBY8"/>
<dbReference type="FunCoup" id="Q9VBY8">
    <property type="interactions" value="10"/>
</dbReference>
<dbReference type="IntAct" id="Q9VBY8">
    <property type="interactions" value="4"/>
</dbReference>
<dbReference type="STRING" id="7227.FBpp0292144"/>
<dbReference type="PaxDb" id="7227-FBpp0292144"/>
<dbReference type="EnsemblMetazoa" id="FBtr0303025">
    <molecule id="Q9VBY8-1"/>
    <property type="protein sequence ID" value="FBpp0292144"/>
    <property type="gene ID" value="FBgn0266719"/>
</dbReference>
<dbReference type="EnsemblMetazoa" id="FBtr0303026">
    <molecule id="Q9VBY8-2"/>
    <property type="protein sequence ID" value="FBpp0292145"/>
    <property type="gene ID" value="FBgn0266719"/>
</dbReference>
<dbReference type="EnsemblMetazoa" id="FBtr0334505">
    <molecule id="Q9VBY8-3"/>
    <property type="protein sequence ID" value="FBpp0306572"/>
    <property type="gene ID" value="FBgn0266719"/>
</dbReference>
<dbReference type="GeneID" id="43002"/>
<dbReference type="KEGG" id="dme:Dmel_CG34349"/>
<dbReference type="UCSC" id="CG34349-RA">
    <molecule id="Q9VBY8-1"/>
    <property type="organism name" value="d. melanogaster"/>
</dbReference>
<dbReference type="UCSC" id="CG34349-RB">
    <property type="organism name" value="d. melanogaster"/>
</dbReference>
<dbReference type="AGR" id="FB:FBgn0266719"/>
<dbReference type="CTD" id="6769"/>
<dbReference type="FlyBase" id="FBgn0266719">
    <property type="gene designation" value="stac"/>
</dbReference>
<dbReference type="VEuPathDB" id="VectorBase:FBgn0266719"/>
<dbReference type="eggNOG" id="KOG1328">
    <property type="taxonomic scope" value="Eukaryota"/>
</dbReference>
<dbReference type="GeneTree" id="ENSGT00730000110939"/>
<dbReference type="HOGENOM" id="CLU_003295_0_0_1"/>
<dbReference type="InParanoid" id="Q9VBY8"/>
<dbReference type="OMA" id="TLSEEWC"/>
<dbReference type="OrthoDB" id="67700at2759"/>
<dbReference type="PhylomeDB" id="Q9VBY8"/>
<dbReference type="BioGRID-ORCS" id="43002">
    <property type="hits" value="0 hits in 1 CRISPR screen"/>
</dbReference>
<dbReference type="GenomeRNAi" id="43002"/>
<dbReference type="PRO" id="PR:Q9VBY8"/>
<dbReference type="Proteomes" id="UP000000803">
    <property type="component" value="Chromosome 3R"/>
</dbReference>
<dbReference type="Bgee" id="FBgn0266719">
    <property type="expression patterns" value="Expressed in crop (Drosophila) and 97 other cell types or tissues"/>
</dbReference>
<dbReference type="ExpressionAtlas" id="Q9VBY8">
    <property type="expression patterns" value="baseline and differential"/>
</dbReference>
<dbReference type="GO" id="GO:0005856">
    <property type="term" value="C:cytoskeleton"/>
    <property type="evidence" value="ECO:0007669"/>
    <property type="project" value="UniProtKB-SubCell"/>
</dbReference>
<dbReference type="GO" id="GO:0030175">
    <property type="term" value="C:filopodium"/>
    <property type="evidence" value="ECO:0007669"/>
    <property type="project" value="UniProtKB-SubCell"/>
</dbReference>
<dbReference type="GO" id="GO:0005770">
    <property type="term" value="C:late endosome"/>
    <property type="evidence" value="ECO:0007669"/>
    <property type="project" value="UniProtKB-SubCell"/>
</dbReference>
<dbReference type="GO" id="GO:0005764">
    <property type="term" value="C:lysosome"/>
    <property type="evidence" value="ECO:0007669"/>
    <property type="project" value="UniProtKB-SubCell"/>
</dbReference>
<dbReference type="GO" id="GO:0099503">
    <property type="term" value="C:secretory vesicle"/>
    <property type="evidence" value="ECO:0000314"/>
    <property type="project" value="FlyBase"/>
</dbReference>
<dbReference type="GO" id="GO:0008021">
    <property type="term" value="C:synaptic vesicle"/>
    <property type="evidence" value="ECO:0000303"/>
    <property type="project" value="FlyBase"/>
</dbReference>
<dbReference type="GO" id="GO:0046872">
    <property type="term" value="F:metal ion binding"/>
    <property type="evidence" value="ECO:0007669"/>
    <property type="project" value="UniProtKB-KW"/>
</dbReference>
<dbReference type="GO" id="GO:0035147">
    <property type="term" value="P:branch fusion, open tracheal system"/>
    <property type="evidence" value="ECO:0000315"/>
    <property type="project" value="FlyBase"/>
</dbReference>
<dbReference type="GO" id="GO:0007269">
    <property type="term" value="P:neurotransmitter secretion"/>
    <property type="evidence" value="ECO:0000303"/>
    <property type="project" value="FlyBase"/>
</dbReference>
<dbReference type="GO" id="GO:0016082">
    <property type="term" value="P:synaptic vesicle priming"/>
    <property type="evidence" value="ECO:0000303"/>
    <property type="project" value="FlyBase"/>
</dbReference>
<dbReference type="CDD" id="cd04009">
    <property type="entry name" value="C2B_Munc13-like"/>
    <property type="match status" value="1"/>
</dbReference>
<dbReference type="FunFam" id="2.60.40.150:FF:000533">
    <property type="entry name" value="Protein unc-13 homolog 4B"/>
    <property type="match status" value="1"/>
</dbReference>
<dbReference type="FunFam" id="2.60.40.150:FF:000254">
    <property type="entry name" value="protein unc-13 homolog D isoform X1"/>
    <property type="match status" value="1"/>
</dbReference>
<dbReference type="Gene3D" id="1.10.357.50">
    <property type="match status" value="1"/>
</dbReference>
<dbReference type="Gene3D" id="2.60.40.150">
    <property type="entry name" value="C2 domain"/>
    <property type="match status" value="2"/>
</dbReference>
<dbReference type="InterPro" id="IPR000008">
    <property type="entry name" value="C2_dom"/>
</dbReference>
<dbReference type="InterPro" id="IPR035892">
    <property type="entry name" value="C2_domain_sf"/>
</dbReference>
<dbReference type="InterPro" id="IPR014770">
    <property type="entry name" value="Munc13_1"/>
</dbReference>
<dbReference type="InterPro" id="IPR014772">
    <property type="entry name" value="Munc13_dom-2"/>
</dbReference>
<dbReference type="InterPro" id="IPR052095">
    <property type="entry name" value="UNC-13_domain"/>
</dbReference>
<dbReference type="PANTHER" id="PTHR45999:SF2">
    <property type="entry name" value="PROTEIN UNC-13 HOMOLOG 4B"/>
    <property type="match status" value="1"/>
</dbReference>
<dbReference type="PANTHER" id="PTHR45999">
    <property type="entry name" value="UNC-13-4A, ISOFORM B"/>
    <property type="match status" value="1"/>
</dbReference>
<dbReference type="Pfam" id="PF00168">
    <property type="entry name" value="C2"/>
    <property type="match status" value="2"/>
</dbReference>
<dbReference type="PRINTS" id="PR00360">
    <property type="entry name" value="C2DOMAIN"/>
</dbReference>
<dbReference type="SMART" id="SM00239">
    <property type="entry name" value="C2"/>
    <property type="match status" value="2"/>
</dbReference>
<dbReference type="SUPFAM" id="SSF49562">
    <property type="entry name" value="C2 domain (Calcium/lipid-binding domain, CaLB)"/>
    <property type="match status" value="2"/>
</dbReference>
<dbReference type="PROSITE" id="PS50004">
    <property type="entry name" value="C2"/>
    <property type="match status" value="2"/>
</dbReference>
<dbReference type="PROSITE" id="PS51258">
    <property type="entry name" value="MHD1"/>
    <property type="match status" value="1"/>
</dbReference>
<dbReference type="PROSITE" id="PS51259">
    <property type="entry name" value="MHD2"/>
    <property type="match status" value="1"/>
</dbReference>
<comment type="function">
    <text evidence="5">Essential for tracheal development in embryos. Functions with the GTPase Rab39 and downstream of dnd, to regulate lumen fusion between previously separate tracheal branches (anastomosis). Essential component of secretory lysosome-related organelles (SLs) that are present in the tracheal fusion tip cells (FCs). Mediates intracellular fusion of the extending tracheal stalk cell lumen in the FCs by recruiting the SNARE complex component Syx1A to the SLs, this may then enable the SLs to interact with complementary SNAREs (such as Syb) present in the apical membrane of the FC-FC interface and the membranes of the separate tracheal stalk cells. May also function in the maturation and exocytosis of the SLs.</text>
</comment>
<comment type="cofactor">
    <cofactor evidence="1">
        <name>Ca(2+)</name>
        <dbReference type="ChEBI" id="CHEBI:29108"/>
    </cofactor>
</comment>
<comment type="subunit">
    <text evidence="6">Interacts with Cam.</text>
</comment>
<comment type="subcellular location">
    <subcellularLocation>
        <location evidence="5">Cytoplasm</location>
    </subcellularLocation>
    <subcellularLocation>
        <location evidence="5">Cytoplasm</location>
        <location evidence="5">Cytoskeleton</location>
    </subcellularLocation>
    <subcellularLocation>
        <location evidence="5">Cell projection</location>
        <location evidence="5">Filopodium</location>
    </subcellularLocation>
    <subcellularLocation>
        <location evidence="5">Late endosome</location>
    </subcellularLocation>
    <subcellularLocation>
        <location evidence="5">Lysosome</location>
    </subcellularLocation>
    <text evidence="5">Expressed throughout the cytoplasm of embryonic tracheal cells, except in the tracheal fusion cells (FCs) where it localizes to discrete intracellular vesicles. These vesicles also accumulate Rab39 and display late-endosomal, lysosomal, and SNARE components (Syx1A), characteristics of lysosome-related organelles. Prior to contact between FCs the vesicles localize to the presumed fusion point and sometimes to the filopodia. On contact between FCs, the lysosomes accumulate and move along the cytoskeleton track in a dynein-dependent manner between the two apical domains, becoming densely packed around the interface between the fusion cells. Some of the puncta remain associated with the primary apical FC membrane.</text>
</comment>
<comment type="alternative products">
    <event type="alternative splicing"/>
    <isoform>
        <id>Q9VBY8-1</id>
        <name evidence="12">C</name>
        <sequence type="displayed"/>
    </isoform>
    <isoform>
        <id>Q9VBY8-2</id>
        <name evidence="12">D</name>
        <sequence type="described" ref="VSP_058549"/>
    </isoform>
    <isoform>
        <id>Q9VBY8-3</id>
        <name evidence="12">E</name>
        <sequence type="described" ref="VSP_058550"/>
    </isoform>
</comment>
<comment type="developmental stage">
    <text evidence="5 6">In stage 16-17 embryos, expressed in the epidermis, tracheal system, Malpighian tubules, boundary cells of the hindgut, muscles and dorsal vessel. Expressed in large puncta in the hemocytes. Expressed in the fusion cells of the tracheal branch tips (PubMed:27323327). Detected first in early pupae and has very high levels of expression in the adult head (PubMed:9813038).</text>
</comment>
<comment type="miscellaneous">
    <text evidence="7">'Staccato' means detached in Italian, referring to the unclosed gaps in the tracheal lumen of mutants.</text>
</comment>
<comment type="similarity">
    <text evidence="8">Belongs to the unc-13 family.</text>
</comment>
<comment type="sequence caution" evidence="8">
    <conflict type="erroneous initiation">
        <sequence resource="EMBL-CDS" id="ACU00262"/>
    </conflict>
    <text>Extended N-terminus.</text>
</comment>
<protein>
    <recommendedName>
        <fullName evidence="9">Protein unc-13 homolog 4B</fullName>
    </recommendedName>
    <alternativeName>
        <fullName evidence="7">Protein Staccato</fullName>
    </alternativeName>
</protein>
<sequence>MDEEQMWKGFFFKLQELKMNPPTEHEHQLQDGDDGFFEKFGSLLRQKSQIDEGVLKSSLAPLEENGSGGEEDSDESPDGTLQLSQDSECTSIDTFATESTLASSSDKDISTSVLDSAPVMNVTDLYEEILFEIFNNIGCENNEECTNSLVEFVQDAFKIPNATHEEIYEAARLKEPPNVRLNVEIIKAENLMSKDSNGLSDPFVTLYLESNGSHRYNSSVKPATLNPIWEEHFSLPITENARDEVLIVEVWDFDAAETVKEKVNKILDVKGVKGLSKLMKEIAVTASSGKHDNELIGRAAITLKSIPVSGLTVWYNLEKGSKGRSRGSLLVNLALSAEKNKSVAVQEHKNLLKLLLMYELETSQVANYWWSGKFSPNAELIRSQHAAQSGLTPFDCALSQWHAYSTIHETHKLNFTLFNSILDVVVPVITYMQNDSEDVKTFWDGVKRLLPSCFAVLRKLRSKNTSDKNIIRALNEVLDILKKIKELEVPESVDIFPKSVYGWLHTNDTDETCNIDTAIEDAINTGTREWLEHIVEGSRQSKNTETDDEKLQYVIKLIQMVRSDLQRAMEYFDKIFYHKIQLNYSAVLYLFYDSKLAEICKSIIIEVCNNIKRLDVPDDQFEYLPNLENVNMGTTLFEVYLILKRYVQLGESLCSEPLELSNFYPWFERGVTHWLDISIIKALSRIQKAIDLDQLKAVDETVKYSSSAVDTLSIFYQIKIFWQQLDWPEVEGSYIFVAKIVNDLCRCCIFYAQQMSRRVENIFIADDNNKNFILSEEWCIAINNMDYIRQSLPSFIKELSIDDIIKRLGEYRTNLEAERCASTIKTVIENALDTERNQIVELIEIVARKMAPPIRRYLAEGAEVLAKDSNSMDQLMMYLESSLATLYDTLNEINFQRILDGIWSELSIIMYDLIQSNLDKRRPPAFFQNLNNTLQTMMDCFKMGNLQTSDIKILSSIQSRLRLYSLETSDLIHQYYLERLENQKSQESSPYGQLTITAQLTDTGLLLNILNARNLLPMDSNGSVDSFVKASFMPTSRFNDVPTVKTNVHNKSCFPLYDQEFRINLSDHQRSEKNSLIVFSIKDKDLFGMSSQYIAESYISFADLEATPPGEQIMMNLSRPEYTDSESLRALEYRLGDKQAKDFLKKLKNRSFS</sequence>
<gene>
    <name evidence="7 12" type="primary">stac</name>
    <name evidence="7" type="synonym">Unc-13-4B</name>
    <name evidence="12" type="ORF">CG34349</name>
</gene>
<reference evidence="13" key="1">
    <citation type="journal article" date="2000" name="Science">
        <title>The genome sequence of Drosophila melanogaster.</title>
        <authorList>
            <person name="Adams M.D."/>
            <person name="Celniker S.E."/>
            <person name="Holt R.A."/>
            <person name="Evans C.A."/>
            <person name="Gocayne J.D."/>
            <person name="Amanatides P.G."/>
            <person name="Scherer S.E."/>
            <person name="Li P.W."/>
            <person name="Hoskins R.A."/>
            <person name="Galle R.F."/>
            <person name="George R.A."/>
            <person name="Lewis S.E."/>
            <person name="Richards S."/>
            <person name="Ashburner M."/>
            <person name="Henderson S.N."/>
            <person name="Sutton G.G."/>
            <person name="Wortman J.R."/>
            <person name="Yandell M.D."/>
            <person name="Zhang Q."/>
            <person name="Chen L.X."/>
            <person name="Brandon R.C."/>
            <person name="Rogers Y.-H.C."/>
            <person name="Blazej R.G."/>
            <person name="Champe M."/>
            <person name="Pfeiffer B.D."/>
            <person name="Wan K.H."/>
            <person name="Doyle C."/>
            <person name="Baxter E.G."/>
            <person name="Helt G."/>
            <person name="Nelson C.R."/>
            <person name="Miklos G.L.G."/>
            <person name="Abril J.F."/>
            <person name="Agbayani A."/>
            <person name="An H.-J."/>
            <person name="Andrews-Pfannkoch C."/>
            <person name="Baldwin D."/>
            <person name="Ballew R.M."/>
            <person name="Basu A."/>
            <person name="Baxendale J."/>
            <person name="Bayraktaroglu L."/>
            <person name="Beasley E.M."/>
            <person name="Beeson K.Y."/>
            <person name="Benos P.V."/>
            <person name="Berman B.P."/>
            <person name="Bhandari D."/>
            <person name="Bolshakov S."/>
            <person name="Borkova D."/>
            <person name="Botchan M.R."/>
            <person name="Bouck J."/>
            <person name="Brokstein P."/>
            <person name="Brottier P."/>
            <person name="Burtis K.C."/>
            <person name="Busam D.A."/>
            <person name="Butler H."/>
            <person name="Cadieu E."/>
            <person name="Center A."/>
            <person name="Chandra I."/>
            <person name="Cherry J.M."/>
            <person name="Cawley S."/>
            <person name="Dahlke C."/>
            <person name="Davenport L.B."/>
            <person name="Davies P."/>
            <person name="de Pablos B."/>
            <person name="Delcher A."/>
            <person name="Deng Z."/>
            <person name="Mays A.D."/>
            <person name="Dew I."/>
            <person name="Dietz S.M."/>
            <person name="Dodson K."/>
            <person name="Doup L.E."/>
            <person name="Downes M."/>
            <person name="Dugan-Rocha S."/>
            <person name="Dunkov B.C."/>
            <person name="Dunn P."/>
            <person name="Durbin K.J."/>
            <person name="Evangelista C.C."/>
            <person name="Ferraz C."/>
            <person name="Ferriera S."/>
            <person name="Fleischmann W."/>
            <person name="Fosler C."/>
            <person name="Gabrielian A.E."/>
            <person name="Garg N.S."/>
            <person name="Gelbart W.M."/>
            <person name="Glasser K."/>
            <person name="Glodek A."/>
            <person name="Gong F."/>
            <person name="Gorrell J.H."/>
            <person name="Gu Z."/>
            <person name="Guan P."/>
            <person name="Harris M."/>
            <person name="Harris N.L."/>
            <person name="Harvey D.A."/>
            <person name="Heiman T.J."/>
            <person name="Hernandez J.R."/>
            <person name="Houck J."/>
            <person name="Hostin D."/>
            <person name="Houston K.A."/>
            <person name="Howland T.J."/>
            <person name="Wei M.-H."/>
            <person name="Ibegwam C."/>
            <person name="Jalali M."/>
            <person name="Kalush F."/>
            <person name="Karpen G.H."/>
            <person name="Ke Z."/>
            <person name="Kennison J.A."/>
            <person name="Ketchum K.A."/>
            <person name="Kimmel B.E."/>
            <person name="Kodira C.D."/>
            <person name="Kraft C.L."/>
            <person name="Kravitz S."/>
            <person name="Kulp D."/>
            <person name="Lai Z."/>
            <person name="Lasko P."/>
            <person name="Lei Y."/>
            <person name="Levitsky A.A."/>
            <person name="Li J.H."/>
            <person name="Li Z."/>
            <person name="Liang Y."/>
            <person name="Lin X."/>
            <person name="Liu X."/>
            <person name="Mattei B."/>
            <person name="McIntosh T.C."/>
            <person name="McLeod M.P."/>
            <person name="McPherson D."/>
            <person name="Merkulov G."/>
            <person name="Milshina N.V."/>
            <person name="Mobarry C."/>
            <person name="Morris J."/>
            <person name="Moshrefi A."/>
            <person name="Mount S.M."/>
            <person name="Moy M."/>
            <person name="Murphy B."/>
            <person name="Murphy L."/>
            <person name="Muzny D.M."/>
            <person name="Nelson D.L."/>
            <person name="Nelson D.R."/>
            <person name="Nelson K.A."/>
            <person name="Nixon K."/>
            <person name="Nusskern D.R."/>
            <person name="Pacleb J.M."/>
            <person name="Palazzolo M."/>
            <person name="Pittman G.S."/>
            <person name="Pan S."/>
            <person name="Pollard J."/>
            <person name="Puri V."/>
            <person name="Reese M.G."/>
            <person name="Reinert K."/>
            <person name="Remington K."/>
            <person name="Saunders R.D.C."/>
            <person name="Scheeler F."/>
            <person name="Shen H."/>
            <person name="Shue B.C."/>
            <person name="Siden-Kiamos I."/>
            <person name="Simpson M."/>
            <person name="Skupski M.P."/>
            <person name="Smith T.J."/>
            <person name="Spier E."/>
            <person name="Spradling A.C."/>
            <person name="Stapleton M."/>
            <person name="Strong R."/>
            <person name="Sun E."/>
            <person name="Svirskas R."/>
            <person name="Tector C."/>
            <person name="Turner R."/>
            <person name="Venter E."/>
            <person name="Wang A.H."/>
            <person name="Wang X."/>
            <person name="Wang Z.-Y."/>
            <person name="Wassarman D.A."/>
            <person name="Weinstock G.M."/>
            <person name="Weissenbach J."/>
            <person name="Williams S.M."/>
            <person name="Woodage T."/>
            <person name="Worley K.C."/>
            <person name="Wu D."/>
            <person name="Yang S."/>
            <person name="Yao Q.A."/>
            <person name="Ye J."/>
            <person name="Yeh R.-F."/>
            <person name="Zaveri J.S."/>
            <person name="Zhan M."/>
            <person name="Zhang G."/>
            <person name="Zhao Q."/>
            <person name="Zheng L."/>
            <person name="Zheng X.H."/>
            <person name="Zhong F.N."/>
            <person name="Zhong W."/>
            <person name="Zhou X."/>
            <person name="Zhu S.C."/>
            <person name="Zhu X."/>
            <person name="Smith H.O."/>
            <person name="Gibbs R.A."/>
            <person name="Myers E.W."/>
            <person name="Rubin G.M."/>
            <person name="Venter J.C."/>
        </authorList>
    </citation>
    <scope>NUCLEOTIDE SEQUENCE [LARGE SCALE GENOMIC DNA]</scope>
    <source>
        <strain evidence="13">Berkeley</strain>
    </source>
</reference>
<reference evidence="13" key="2">
    <citation type="journal article" date="2002" name="Genome Biol.">
        <title>Annotation of the Drosophila melanogaster euchromatic genome: a systematic review.</title>
        <authorList>
            <person name="Misra S."/>
            <person name="Crosby M.A."/>
            <person name="Mungall C.J."/>
            <person name="Matthews B.B."/>
            <person name="Campbell K.S."/>
            <person name="Hradecky P."/>
            <person name="Huang Y."/>
            <person name="Kaminker J.S."/>
            <person name="Millburn G.H."/>
            <person name="Prochnik S.E."/>
            <person name="Smith C.D."/>
            <person name="Tupy J.L."/>
            <person name="Whitfield E.J."/>
            <person name="Bayraktaroglu L."/>
            <person name="Berman B.P."/>
            <person name="Bettencourt B.R."/>
            <person name="Celniker S.E."/>
            <person name="de Grey A.D.N.J."/>
            <person name="Drysdale R.A."/>
            <person name="Harris N.L."/>
            <person name="Richter J."/>
            <person name="Russo S."/>
            <person name="Schroeder A.J."/>
            <person name="Shu S.Q."/>
            <person name="Stapleton M."/>
            <person name="Yamada C."/>
            <person name="Ashburner M."/>
            <person name="Gelbart W.M."/>
            <person name="Rubin G.M."/>
            <person name="Lewis S.E."/>
        </authorList>
    </citation>
    <scope>GENOME REANNOTATION</scope>
    <source>
        <strain evidence="13">Berkeley</strain>
    </source>
</reference>
<reference evidence="10 11" key="3">
    <citation type="submission" date="2009-08" db="EMBL/GenBank/DDBJ databases">
        <authorList>
            <person name="Carlson J."/>
            <person name="Booth B."/>
            <person name="Frise E."/>
            <person name="Park S."/>
            <person name="Wan K."/>
            <person name="Yu C."/>
            <person name="Celniker S."/>
        </authorList>
    </citation>
    <scope>NUCLEOTIDE SEQUENCE [LARGE SCALE MRNA] OF 1-239 AND 783-1153</scope>
    <source>
        <strain evidence="11">Berkeley</strain>
    </source>
</reference>
<reference key="4">
    <citation type="journal article" date="1998" name="J. Biol. Chem.">
        <title>Retinal targets for calmodulin include proteins implicated in synaptic transmission.</title>
        <authorList>
            <person name="Xu X.-Z.S."/>
            <person name="Wes P.D."/>
            <person name="Chen H."/>
            <person name="Li H.-S."/>
            <person name="Yu M."/>
            <person name="Morgan S."/>
            <person name="Liu Y."/>
            <person name="Montell C."/>
        </authorList>
    </citation>
    <scope>INTERACTION WITH CAM</scope>
    <scope>DEVELOPMENTAL STAGE</scope>
</reference>
<reference evidence="8" key="5">
    <citation type="journal article" date="2016" name="Nat. Cell Biol.">
        <title>Staccato/Unc-13-4 controls secretory lysosome-mediated lumen fusion during epithelial tube anastomosis.</title>
        <authorList>
            <person name="Caviglia S."/>
            <person name="Brankatschk M."/>
            <person name="Fischer E.J."/>
            <person name="Eaton S."/>
            <person name="Luschnig S."/>
        </authorList>
    </citation>
    <scope>FUNCTION</scope>
    <scope>SUBCELLULAR LOCATION</scope>
    <scope>DEVELOPMENTAL STAGE</scope>
    <scope>MUTAGENESIS OF 1124-ASP--SER-1153</scope>
</reference>
<organism evidence="13">
    <name type="scientific">Drosophila melanogaster</name>
    <name type="common">Fruit fly</name>
    <dbReference type="NCBI Taxonomy" id="7227"/>
    <lineage>
        <taxon>Eukaryota</taxon>
        <taxon>Metazoa</taxon>
        <taxon>Ecdysozoa</taxon>
        <taxon>Arthropoda</taxon>
        <taxon>Hexapoda</taxon>
        <taxon>Insecta</taxon>
        <taxon>Pterygota</taxon>
        <taxon>Neoptera</taxon>
        <taxon>Endopterygota</taxon>
        <taxon>Diptera</taxon>
        <taxon>Brachycera</taxon>
        <taxon>Muscomorpha</taxon>
        <taxon>Ephydroidea</taxon>
        <taxon>Drosophilidae</taxon>
        <taxon>Drosophila</taxon>
        <taxon>Sophophora</taxon>
    </lineage>
</organism>
<evidence type="ECO:0000255" key="1">
    <source>
        <dbReference type="PROSITE-ProRule" id="PRU00041"/>
    </source>
</evidence>
<evidence type="ECO:0000255" key="2">
    <source>
        <dbReference type="PROSITE-ProRule" id="PRU00587"/>
    </source>
</evidence>
<evidence type="ECO:0000255" key="3">
    <source>
        <dbReference type="PROSITE-ProRule" id="PRU00588"/>
    </source>
</evidence>
<evidence type="ECO:0000256" key="4">
    <source>
        <dbReference type="SAM" id="MobiDB-lite"/>
    </source>
</evidence>
<evidence type="ECO:0000269" key="5">
    <source>
    </source>
</evidence>
<evidence type="ECO:0000269" key="6">
    <source>
    </source>
</evidence>
<evidence type="ECO:0000303" key="7">
    <source>
    </source>
</evidence>
<evidence type="ECO:0000305" key="8"/>
<evidence type="ECO:0000305" key="9">
    <source>
    </source>
</evidence>
<evidence type="ECO:0000312" key="10">
    <source>
        <dbReference type="EMBL" id="ACD81812.1"/>
    </source>
</evidence>
<evidence type="ECO:0000312" key="11">
    <source>
        <dbReference type="EMBL" id="ACU00262.1"/>
    </source>
</evidence>
<evidence type="ECO:0000312" key="12">
    <source>
        <dbReference type="FlyBase" id="FBgn0266719"/>
    </source>
</evidence>
<evidence type="ECO:0000312" key="13">
    <source>
        <dbReference type="Proteomes" id="UP000000803"/>
    </source>
</evidence>
<accession>Q9VBY8</accession>
<accession>A0A0B4KHI5</accession>
<accession>A8JRA6</accession>
<accession>B3DN10</accession>
<accession>C6SV37</accession>
<proteinExistence type="evidence at protein level"/>
<keyword id="KW-0025">Alternative splicing</keyword>
<keyword id="KW-0106">Calcium</keyword>
<keyword id="KW-0966">Cell projection</keyword>
<keyword id="KW-0963">Cytoplasm</keyword>
<keyword id="KW-0206">Cytoskeleton</keyword>
<keyword id="KW-0217">Developmental protein</keyword>
<keyword id="KW-0967">Endosome</keyword>
<keyword id="KW-0268">Exocytosis</keyword>
<keyword id="KW-0458">Lysosome</keyword>
<keyword id="KW-0479">Metal-binding</keyword>
<keyword id="KW-1185">Reference proteome</keyword>
<keyword id="KW-0677">Repeat</keyword>
<name>UN13B_DROME</name>
<feature type="chain" id="PRO_0000437524" description="Protein unc-13 homolog 4B">
    <location>
        <begin position="1"/>
        <end position="1153"/>
    </location>
</feature>
<feature type="domain" description="C2 1" evidence="1">
    <location>
        <begin position="162"/>
        <end position="288"/>
    </location>
</feature>
<feature type="domain" description="MHD1" evidence="2">
    <location>
        <begin position="637"/>
        <end position="755"/>
    </location>
</feature>
<feature type="domain" description="MHD2" evidence="3">
    <location>
        <begin position="869"/>
        <end position="975"/>
    </location>
</feature>
<feature type="domain" description="C2 2" evidence="1">
    <location>
        <begin position="990"/>
        <end position="1114"/>
    </location>
</feature>
<feature type="region of interest" description="Disordered" evidence="4">
    <location>
        <begin position="54"/>
        <end position="84"/>
    </location>
</feature>
<feature type="binding site" evidence="1">
    <location>
        <position position="195"/>
    </location>
    <ligand>
        <name>Ca(2+)</name>
        <dbReference type="ChEBI" id="CHEBI:29108"/>
        <label>1</label>
    </ligand>
</feature>
<feature type="binding site" evidence="1">
    <location>
        <position position="201"/>
    </location>
    <ligand>
        <name>Ca(2+)</name>
        <dbReference type="ChEBI" id="CHEBI:29108"/>
        <label>1</label>
    </ligand>
</feature>
<feature type="binding site" evidence="1">
    <location>
        <position position="252"/>
    </location>
    <ligand>
        <name>Ca(2+)</name>
        <dbReference type="ChEBI" id="CHEBI:29108"/>
        <label>1</label>
    </ligand>
</feature>
<feature type="binding site" evidence="1">
    <location>
        <position position="253"/>
    </location>
    <ligand>
        <name>Ca(2+)</name>
        <dbReference type="ChEBI" id="CHEBI:29108"/>
        <label>1</label>
    </ligand>
</feature>
<feature type="binding site" evidence="1">
    <location>
        <position position="254"/>
    </location>
    <ligand>
        <name>Ca(2+)</name>
        <dbReference type="ChEBI" id="CHEBI:29108"/>
        <label>1</label>
    </ligand>
</feature>
<feature type="binding site" evidence="1">
    <location>
        <position position="1019"/>
    </location>
    <ligand>
        <name>Ca(2+)</name>
        <dbReference type="ChEBI" id="CHEBI:29108"/>
        <label>2</label>
    </ligand>
</feature>
<feature type="binding site" evidence="1">
    <location>
        <position position="1025"/>
    </location>
    <ligand>
        <name>Ca(2+)</name>
        <dbReference type="ChEBI" id="CHEBI:29108"/>
        <label>2</label>
    </ligand>
</feature>
<feature type="binding site" evidence="1">
    <location>
        <position position="1083"/>
    </location>
    <ligand>
        <name>Ca(2+)</name>
        <dbReference type="ChEBI" id="CHEBI:29108"/>
        <label>2</label>
    </ligand>
</feature>
<feature type="binding site" evidence="1">
    <location>
        <position position="1085"/>
    </location>
    <ligand>
        <name>Ca(2+)</name>
        <dbReference type="ChEBI" id="CHEBI:29108"/>
        <label>2</label>
    </ligand>
</feature>
<feature type="splice variant" id="VSP_058549" description="In isoform D.">
    <original>MDEEQMWKGFFFKLQELKMNPPTEHEHQLQDGDDGFFEKFGSLLRQKSQIDEGVLKSSLAPLEENGSGGEEDSDESPDGTLQLSQDSECTSIDTFATESTLASSSDKDISTSVLDSAPVMN</original>
    <variation>MSYLSLPRVLSKFGSQNHSSSNQSSKTNSLTRSSTRTGCDEIRLPRKASSTQSLNKPFERRMSILNRNGSISSRHFRGVHKHLLDSHAKAVCHSMT</variation>
    <location>
        <begin position="1"/>
        <end position="121"/>
    </location>
</feature>
<feature type="splice variant" id="VSP_058550" description="In isoform E.">
    <original>MDEEQMWKGFFFKLQELKMNPPTEHEHQ</original>
    <variation>MLKSYFRRSELRIFEKIR</variation>
    <location>
        <begin position="1"/>
        <end position="28"/>
    </location>
</feature>
<feature type="mutagenesis site" description="In 3B20; probable loss of function. The lumen of separate tracheal branches fails to fuse during anastomosis and Syx1A does not localize to the fusion point." evidence="5">
    <location>
        <begin position="1124"/>
        <end position="1153"/>
    </location>
</feature>